<protein>
    <recommendedName>
        <fullName>Interstitial collagenase</fullName>
        <ecNumber>3.4.24.7</ecNumber>
    </recommendedName>
    <alternativeName>
        <fullName>Matrix metalloproteinase-1</fullName>
        <shortName>MMP-1</shortName>
    </alternativeName>
    <alternativeName>
        <fullName>TC1</fullName>
    </alternativeName>
</protein>
<evidence type="ECO:0000250" key="1"/>
<evidence type="ECO:0000255" key="2"/>
<evidence type="ECO:0000255" key="3">
    <source>
        <dbReference type="PROSITE-ProRule" id="PRU10095"/>
    </source>
</evidence>
<evidence type="ECO:0000256" key="4">
    <source>
        <dbReference type="SAM" id="MobiDB-lite"/>
    </source>
</evidence>
<evidence type="ECO:0000305" key="5"/>
<organism>
    <name type="scientific">Aquarana catesbeiana</name>
    <name type="common">American bullfrog</name>
    <name type="synonym">Rana catesbeiana</name>
    <dbReference type="NCBI Taxonomy" id="8400"/>
    <lineage>
        <taxon>Eukaryota</taxon>
        <taxon>Metazoa</taxon>
        <taxon>Chordata</taxon>
        <taxon>Craniata</taxon>
        <taxon>Vertebrata</taxon>
        <taxon>Euteleostomi</taxon>
        <taxon>Amphibia</taxon>
        <taxon>Batrachia</taxon>
        <taxon>Anura</taxon>
        <taxon>Neobatrachia</taxon>
        <taxon>Ranoidea</taxon>
        <taxon>Ranidae</taxon>
        <taxon>Aquarana</taxon>
    </lineage>
</organism>
<name>MMP1_AQUCT</name>
<sequence>MLSGLWSSILALLGVFLQSVGEFRAETQEQDVEIVQKYLKNYYNSDKRNSGLVVEILKQFFGLKVTGKPDAETLVMKQSTCGVPDVGEYVLTPGNPRWENTHLTYRIENYTPDLVSPLTFTKVSEGQADIMISFVRGDHRDKYPFDGPGGNLAHASQPGPGIGGDAHFDEYERWTKNFQDYNLYRVAAHELGHSLGLSHSTDIGALMYPTYLRGDVQLSQDDIDGPSGNPVQPRGPQTPQVCDSKLTFDAITTVRGELMFFKMRTNRFYPEVELGLQAAYEMADRDEVRFFKGNKYWAVSGQDVLYGYPKDIHSSFGFPTGVAHECWSYDEYKQSMDTGYADEFPGDAVFQKFFHGTRQYQFDLKTKRILTLQKANSWFNCRKN</sequence>
<proteinExistence type="evidence at transcript level"/>
<keyword id="KW-0106">Calcium</keyword>
<keyword id="KW-0177">Collagen degradation</keyword>
<keyword id="KW-1015">Disulfide bond</keyword>
<keyword id="KW-0272">Extracellular matrix</keyword>
<keyword id="KW-0378">Hydrolase</keyword>
<keyword id="KW-0479">Metal-binding</keyword>
<keyword id="KW-0482">Metalloprotease</keyword>
<keyword id="KW-0645">Protease</keyword>
<keyword id="KW-0677">Repeat</keyword>
<keyword id="KW-0964">Secreted</keyword>
<keyword id="KW-0732">Signal</keyword>
<keyword id="KW-0862">Zinc</keyword>
<keyword id="KW-0865">Zymogen</keyword>
<accession>Q11133</accession>
<reference key="1">
    <citation type="journal article" date="1994" name="Int. J. Dev. Biol.">
        <title>Regionally and hormonally regulated expression of genes of collagen and collagenase in the anuran larval skin.</title>
        <authorList>
            <person name="Oofusa K."/>
            <person name="Yomori S."/>
            <person name="Yoshizato K."/>
        </authorList>
    </citation>
    <scope>NUCLEOTIDE SEQUENCE [MRNA]</scope>
    <source>
        <tissue>Skin</tissue>
    </source>
</reference>
<comment type="function">
    <text>Cleaves collagens of types I, II, and III at one site in the helical domain. Also cleaves collagens of types VII and X.</text>
</comment>
<comment type="catalytic activity">
    <reaction>
        <text>Cleavage of the triple helix of collagen at about three-quarters of the length of the molecule from the N-terminus, at 775-Gly-|-Ile-776 in the alpha1(I) chain. Cleaves synthetic substrates and alpha-macroglobulins at bonds where P1' is a hydrophobic residue.</text>
        <dbReference type="EC" id="3.4.24.7"/>
    </reaction>
</comment>
<comment type="cofactor">
    <cofactor evidence="1">
        <name>Ca(2+)</name>
        <dbReference type="ChEBI" id="CHEBI:29108"/>
    </cofactor>
    <text evidence="1">Binds 4 Ca(2+) ions per subunit.</text>
</comment>
<comment type="cofactor">
    <cofactor evidence="1">
        <name>Zn(2+)</name>
        <dbReference type="ChEBI" id="CHEBI:29105"/>
    </cofactor>
    <text evidence="1">Binds 2 Zn(2+) ions per subunit.</text>
</comment>
<comment type="activity regulation">
    <text evidence="1">Can be activated without removal of the activation peptide.</text>
</comment>
<comment type="subcellular location">
    <subcellularLocation>
        <location evidence="1">Secreted</location>
        <location evidence="1">Extracellular space</location>
        <location evidence="1">Extracellular matrix</location>
    </subcellularLocation>
</comment>
<comment type="domain">
    <text>The conserved cysteine present in the cysteine-switch motif binds the catalytic zinc ion, thus inhibiting the enzyme. The dissociation of the cysteine from the zinc ion upon the activation-peptide release activates the enzyme.</text>
</comment>
<comment type="similarity">
    <text evidence="5">Belongs to the peptidase M10A family.</text>
</comment>
<feature type="signal peptide" evidence="2">
    <location>
        <begin position="1"/>
        <end position="25"/>
    </location>
</feature>
<feature type="propeptide" id="PRO_0000028712" description="Activation peptide" evidence="2">
    <location>
        <begin position="26"/>
        <end position="88"/>
    </location>
</feature>
<feature type="chain" id="PRO_0000028713" description="Interstitial collagenase">
    <location>
        <begin position="89"/>
        <end position="384"/>
    </location>
</feature>
<feature type="repeat" description="Hemopexin 1">
    <location>
        <begin position="273"/>
        <end position="319"/>
    </location>
</feature>
<feature type="repeat" description="Hemopexin 2">
    <location>
        <begin position="333"/>
        <end position="381"/>
    </location>
</feature>
<feature type="region of interest" description="Disordered" evidence="4">
    <location>
        <begin position="218"/>
        <end position="239"/>
    </location>
</feature>
<feature type="short sequence motif" description="Cysteine switch" evidence="1">
    <location>
        <begin position="79"/>
        <end position="86"/>
    </location>
</feature>
<feature type="active site" evidence="3">
    <location>
        <position position="190"/>
    </location>
</feature>
<feature type="binding site" description="in inhibited form" evidence="1">
    <location>
        <position position="81"/>
    </location>
    <ligand>
        <name>Zn(2+)</name>
        <dbReference type="ChEBI" id="CHEBI:29105"/>
        <label>2</label>
        <note>catalytic</note>
    </ligand>
</feature>
<feature type="binding site" evidence="1">
    <location>
        <position position="113"/>
    </location>
    <ligand>
        <name>Ca(2+)</name>
        <dbReference type="ChEBI" id="CHEBI:29108"/>
        <label>1</label>
    </ligand>
</feature>
<feature type="binding site" evidence="1">
    <location>
        <position position="129"/>
    </location>
    <ligand>
        <name>Ca(2+)</name>
        <dbReference type="ChEBI" id="CHEBI:29108"/>
        <label>2</label>
    </ligand>
</feature>
<feature type="binding site" evidence="1">
    <location>
        <position position="139"/>
    </location>
    <ligand>
        <name>Zn(2+)</name>
        <dbReference type="ChEBI" id="CHEBI:29105"/>
        <label>1</label>
    </ligand>
</feature>
<feature type="binding site" evidence="1">
    <location>
        <position position="141"/>
    </location>
    <ligand>
        <name>Zn(2+)</name>
        <dbReference type="ChEBI" id="CHEBI:29105"/>
        <label>1</label>
    </ligand>
</feature>
<feature type="binding site" evidence="1">
    <location>
        <position position="146"/>
    </location>
    <ligand>
        <name>Ca(2+)</name>
        <dbReference type="ChEBI" id="CHEBI:29108"/>
        <label>3</label>
    </ligand>
</feature>
<feature type="binding site" evidence="1">
    <location>
        <position position="147"/>
    </location>
    <ligand>
        <name>Ca(2+)</name>
        <dbReference type="ChEBI" id="CHEBI:29108"/>
        <label>3</label>
    </ligand>
</feature>
<feature type="binding site" evidence="1">
    <location>
        <position position="149"/>
    </location>
    <ligand>
        <name>Ca(2+)</name>
        <dbReference type="ChEBI" id="CHEBI:29108"/>
        <label>3</label>
    </ligand>
</feature>
<feature type="binding site" evidence="1">
    <location>
        <position position="151"/>
    </location>
    <ligand>
        <name>Ca(2+)</name>
        <dbReference type="ChEBI" id="CHEBI:29108"/>
        <label>3</label>
    </ligand>
</feature>
<feature type="binding site" evidence="1">
    <location>
        <position position="154"/>
    </location>
    <ligand>
        <name>Zn(2+)</name>
        <dbReference type="ChEBI" id="CHEBI:29105"/>
        <label>1</label>
    </ligand>
</feature>
<feature type="binding site" evidence="1">
    <location>
        <position position="161"/>
    </location>
    <ligand>
        <name>Ca(2+)</name>
        <dbReference type="ChEBI" id="CHEBI:29108"/>
        <label>2</label>
    </ligand>
</feature>
<feature type="binding site" evidence="1">
    <location>
        <position position="163"/>
    </location>
    <ligand>
        <name>Ca(2+)</name>
        <dbReference type="ChEBI" id="CHEBI:29108"/>
        <label>2</label>
    </ligand>
</feature>
<feature type="binding site" evidence="1">
    <location>
        <position position="165"/>
    </location>
    <ligand>
        <name>Ca(2+)</name>
        <dbReference type="ChEBI" id="CHEBI:29108"/>
        <label>2</label>
    </ligand>
</feature>
<feature type="binding site" evidence="1">
    <location>
        <position position="167"/>
    </location>
    <ligand>
        <name>Zn(2+)</name>
        <dbReference type="ChEBI" id="CHEBI:29105"/>
        <label>1</label>
    </ligand>
</feature>
<feature type="binding site" evidence="1">
    <location>
        <position position="169"/>
    </location>
    <ligand>
        <name>Ca(2+)</name>
        <dbReference type="ChEBI" id="CHEBI:29108"/>
        <label>3</label>
    </ligand>
</feature>
<feature type="binding site" evidence="1">
    <location>
        <position position="170"/>
    </location>
    <ligand>
        <name>Ca(2+)</name>
        <dbReference type="ChEBI" id="CHEBI:29108"/>
        <label>1</label>
    </ligand>
</feature>
<feature type="binding site" evidence="1">
    <location>
        <position position="172"/>
    </location>
    <ligand>
        <name>Ca(2+)</name>
        <dbReference type="ChEBI" id="CHEBI:29108"/>
        <label>3</label>
    </ligand>
</feature>
<feature type="binding site" evidence="1">
    <location>
        <position position="189"/>
    </location>
    <ligand>
        <name>Zn(2+)</name>
        <dbReference type="ChEBI" id="CHEBI:29105"/>
        <label>2</label>
        <note>catalytic</note>
    </ligand>
</feature>
<feature type="binding site" evidence="1">
    <location>
        <position position="193"/>
    </location>
    <ligand>
        <name>Zn(2+)</name>
        <dbReference type="ChEBI" id="CHEBI:29105"/>
        <label>2</label>
        <note>catalytic</note>
    </ligand>
</feature>
<feature type="binding site" evidence="1">
    <location>
        <position position="199"/>
    </location>
    <ligand>
        <name>Zn(2+)</name>
        <dbReference type="ChEBI" id="CHEBI:29105"/>
        <label>2</label>
        <note>catalytic</note>
    </ligand>
</feature>
<feature type="binding site" evidence="1">
    <location>
        <position position="249"/>
    </location>
    <ligand>
        <name>Ca(2+)</name>
        <dbReference type="ChEBI" id="CHEBI:29108"/>
        <label>4</label>
    </ligand>
</feature>
<feature type="binding site" evidence="1">
    <location>
        <position position="277"/>
    </location>
    <ligand>
        <name>Ca(2+)</name>
        <dbReference type="ChEBI" id="CHEBI:29108"/>
        <label>4</label>
    </ligand>
</feature>
<feature type="binding site" evidence="1">
    <location>
        <position position="347"/>
    </location>
    <ligand>
        <name>Ca(2+)</name>
        <dbReference type="ChEBI" id="CHEBI:29108"/>
        <label>4</label>
    </ligand>
</feature>
<feature type="disulfide bond" evidence="1">
    <location>
        <begin position="242"/>
        <end position="381"/>
    </location>
</feature>
<dbReference type="EC" id="3.4.24.7"/>
<dbReference type="EMBL" id="S75623">
    <property type="protein sequence ID" value="AAB32661.1"/>
    <property type="molecule type" value="mRNA"/>
</dbReference>
<dbReference type="PIR" id="I51267">
    <property type="entry name" value="I51267"/>
</dbReference>
<dbReference type="SMR" id="Q11133"/>
<dbReference type="MEROPS" id="M10.001"/>
<dbReference type="GO" id="GO:0031012">
    <property type="term" value="C:extracellular matrix"/>
    <property type="evidence" value="ECO:0007669"/>
    <property type="project" value="InterPro"/>
</dbReference>
<dbReference type="GO" id="GO:0005576">
    <property type="term" value="C:extracellular region"/>
    <property type="evidence" value="ECO:0007669"/>
    <property type="project" value="UniProtKB-KW"/>
</dbReference>
<dbReference type="GO" id="GO:0004222">
    <property type="term" value="F:metalloendopeptidase activity"/>
    <property type="evidence" value="ECO:0007669"/>
    <property type="project" value="UniProtKB-EC"/>
</dbReference>
<dbReference type="GO" id="GO:0008270">
    <property type="term" value="F:zinc ion binding"/>
    <property type="evidence" value="ECO:0007669"/>
    <property type="project" value="InterPro"/>
</dbReference>
<dbReference type="GO" id="GO:0030574">
    <property type="term" value="P:collagen catabolic process"/>
    <property type="evidence" value="ECO:0007669"/>
    <property type="project" value="UniProtKB-KW"/>
</dbReference>
<dbReference type="GO" id="GO:0030198">
    <property type="term" value="P:extracellular matrix organization"/>
    <property type="evidence" value="ECO:0007669"/>
    <property type="project" value="TreeGrafter"/>
</dbReference>
<dbReference type="GO" id="GO:0006508">
    <property type="term" value="P:proteolysis"/>
    <property type="evidence" value="ECO:0007669"/>
    <property type="project" value="UniProtKB-KW"/>
</dbReference>
<dbReference type="CDD" id="cd00094">
    <property type="entry name" value="HX"/>
    <property type="match status" value="1"/>
</dbReference>
<dbReference type="CDD" id="cd04278">
    <property type="entry name" value="ZnMc_MMP"/>
    <property type="match status" value="1"/>
</dbReference>
<dbReference type="Gene3D" id="3.40.390.10">
    <property type="entry name" value="Collagenase (Catalytic Domain)"/>
    <property type="match status" value="1"/>
</dbReference>
<dbReference type="Gene3D" id="2.110.10.10">
    <property type="entry name" value="Hemopexin-like domain"/>
    <property type="match status" value="2"/>
</dbReference>
<dbReference type="InterPro" id="IPR000585">
    <property type="entry name" value="Hemopexin-like_dom"/>
</dbReference>
<dbReference type="InterPro" id="IPR036375">
    <property type="entry name" value="Hemopexin-like_dom_sf"/>
</dbReference>
<dbReference type="InterPro" id="IPR018487">
    <property type="entry name" value="Hemopexin-like_repeat"/>
</dbReference>
<dbReference type="InterPro" id="IPR033739">
    <property type="entry name" value="M10A_MMP"/>
</dbReference>
<dbReference type="InterPro" id="IPR024079">
    <property type="entry name" value="MetalloPept_cat_dom_sf"/>
</dbReference>
<dbReference type="InterPro" id="IPR001818">
    <property type="entry name" value="Pept_M10_metallopeptidase"/>
</dbReference>
<dbReference type="InterPro" id="IPR021190">
    <property type="entry name" value="Pept_M10A"/>
</dbReference>
<dbReference type="InterPro" id="IPR006026">
    <property type="entry name" value="Peptidase_Metallo"/>
</dbReference>
<dbReference type="InterPro" id="IPR036365">
    <property type="entry name" value="PGBD-like_sf"/>
</dbReference>
<dbReference type="PANTHER" id="PTHR10201:SF151">
    <property type="entry name" value="INTERSTITIAL COLLAGENASE"/>
    <property type="match status" value="1"/>
</dbReference>
<dbReference type="PANTHER" id="PTHR10201">
    <property type="entry name" value="MATRIX METALLOPROTEINASE"/>
    <property type="match status" value="1"/>
</dbReference>
<dbReference type="Pfam" id="PF00045">
    <property type="entry name" value="Hemopexin"/>
    <property type="match status" value="1"/>
</dbReference>
<dbReference type="Pfam" id="PF00413">
    <property type="entry name" value="Peptidase_M10"/>
    <property type="match status" value="1"/>
</dbReference>
<dbReference type="PIRSF" id="PIRSF001191">
    <property type="entry name" value="Peptidase_M10A_matrix"/>
    <property type="match status" value="1"/>
</dbReference>
<dbReference type="PRINTS" id="PR00138">
    <property type="entry name" value="MATRIXIN"/>
</dbReference>
<dbReference type="SMART" id="SM00120">
    <property type="entry name" value="HX"/>
    <property type="match status" value="2"/>
</dbReference>
<dbReference type="SMART" id="SM00235">
    <property type="entry name" value="ZnMc"/>
    <property type="match status" value="1"/>
</dbReference>
<dbReference type="SUPFAM" id="SSF50923">
    <property type="entry name" value="Hemopexin-like domain"/>
    <property type="match status" value="1"/>
</dbReference>
<dbReference type="SUPFAM" id="SSF55486">
    <property type="entry name" value="Metalloproteases ('zincins'), catalytic domain"/>
    <property type="match status" value="1"/>
</dbReference>
<dbReference type="SUPFAM" id="SSF47090">
    <property type="entry name" value="PGBD-like"/>
    <property type="match status" value="1"/>
</dbReference>
<dbReference type="PROSITE" id="PS51642">
    <property type="entry name" value="HEMOPEXIN_2"/>
    <property type="match status" value="2"/>
</dbReference>
<dbReference type="PROSITE" id="PS00142">
    <property type="entry name" value="ZINC_PROTEASE"/>
    <property type="match status" value="1"/>
</dbReference>